<proteinExistence type="inferred from homology"/>
<feature type="chain" id="PRO_1000016431" description="Histidine--tRNA ligase">
    <location>
        <begin position="1"/>
        <end position="519"/>
    </location>
</feature>
<gene>
    <name evidence="1" type="primary">hisS</name>
    <name type="ordered locus">RPC_0893</name>
</gene>
<evidence type="ECO:0000255" key="1">
    <source>
        <dbReference type="HAMAP-Rule" id="MF_00127"/>
    </source>
</evidence>
<accession>Q21AX3</accession>
<dbReference type="EC" id="6.1.1.21" evidence="1"/>
<dbReference type="EMBL" id="CP000301">
    <property type="protein sequence ID" value="ABD86463.1"/>
    <property type="molecule type" value="Genomic_DNA"/>
</dbReference>
<dbReference type="SMR" id="Q21AX3"/>
<dbReference type="STRING" id="316056.RPC_0893"/>
<dbReference type="KEGG" id="rpc:RPC_0893"/>
<dbReference type="eggNOG" id="COG0124">
    <property type="taxonomic scope" value="Bacteria"/>
</dbReference>
<dbReference type="HOGENOM" id="CLU_025113_3_2_5"/>
<dbReference type="OrthoDB" id="9800814at2"/>
<dbReference type="GO" id="GO:0005737">
    <property type="term" value="C:cytoplasm"/>
    <property type="evidence" value="ECO:0007669"/>
    <property type="project" value="UniProtKB-SubCell"/>
</dbReference>
<dbReference type="GO" id="GO:0005524">
    <property type="term" value="F:ATP binding"/>
    <property type="evidence" value="ECO:0007669"/>
    <property type="project" value="UniProtKB-UniRule"/>
</dbReference>
<dbReference type="GO" id="GO:0004821">
    <property type="term" value="F:histidine-tRNA ligase activity"/>
    <property type="evidence" value="ECO:0007669"/>
    <property type="project" value="UniProtKB-UniRule"/>
</dbReference>
<dbReference type="GO" id="GO:0006427">
    <property type="term" value="P:histidyl-tRNA aminoacylation"/>
    <property type="evidence" value="ECO:0007669"/>
    <property type="project" value="UniProtKB-UniRule"/>
</dbReference>
<dbReference type="CDD" id="cd00773">
    <property type="entry name" value="HisRS-like_core"/>
    <property type="match status" value="1"/>
</dbReference>
<dbReference type="Gene3D" id="3.40.50.800">
    <property type="entry name" value="Anticodon-binding domain"/>
    <property type="match status" value="1"/>
</dbReference>
<dbReference type="Gene3D" id="3.30.930.10">
    <property type="entry name" value="Bira Bifunctional Protein, Domain 2"/>
    <property type="match status" value="1"/>
</dbReference>
<dbReference type="HAMAP" id="MF_00127">
    <property type="entry name" value="His_tRNA_synth"/>
    <property type="match status" value="1"/>
</dbReference>
<dbReference type="InterPro" id="IPR006195">
    <property type="entry name" value="aa-tRNA-synth_II"/>
</dbReference>
<dbReference type="InterPro" id="IPR045864">
    <property type="entry name" value="aa-tRNA-synth_II/BPL/LPL"/>
</dbReference>
<dbReference type="InterPro" id="IPR004154">
    <property type="entry name" value="Anticodon-bd"/>
</dbReference>
<dbReference type="InterPro" id="IPR036621">
    <property type="entry name" value="Anticodon-bd_dom_sf"/>
</dbReference>
<dbReference type="InterPro" id="IPR015807">
    <property type="entry name" value="His-tRNA-ligase"/>
</dbReference>
<dbReference type="InterPro" id="IPR041715">
    <property type="entry name" value="HisRS-like_core"/>
</dbReference>
<dbReference type="InterPro" id="IPR004516">
    <property type="entry name" value="HisRS/HisZ"/>
</dbReference>
<dbReference type="NCBIfam" id="TIGR00442">
    <property type="entry name" value="hisS"/>
    <property type="match status" value="1"/>
</dbReference>
<dbReference type="PANTHER" id="PTHR11476:SF7">
    <property type="entry name" value="HISTIDINE--TRNA LIGASE"/>
    <property type="match status" value="1"/>
</dbReference>
<dbReference type="PANTHER" id="PTHR11476">
    <property type="entry name" value="HISTIDYL-TRNA SYNTHETASE"/>
    <property type="match status" value="1"/>
</dbReference>
<dbReference type="Pfam" id="PF03129">
    <property type="entry name" value="HGTP_anticodon"/>
    <property type="match status" value="1"/>
</dbReference>
<dbReference type="Pfam" id="PF13393">
    <property type="entry name" value="tRNA-synt_His"/>
    <property type="match status" value="2"/>
</dbReference>
<dbReference type="PIRSF" id="PIRSF001549">
    <property type="entry name" value="His-tRNA_synth"/>
    <property type="match status" value="1"/>
</dbReference>
<dbReference type="SUPFAM" id="SSF52954">
    <property type="entry name" value="Class II aaRS ABD-related"/>
    <property type="match status" value="1"/>
</dbReference>
<dbReference type="SUPFAM" id="SSF55681">
    <property type="entry name" value="Class II aaRS and biotin synthetases"/>
    <property type="match status" value="1"/>
</dbReference>
<dbReference type="PROSITE" id="PS50862">
    <property type="entry name" value="AA_TRNA_LIGASE_II"/>
    <property type="match status" value="1"/>
</dbReference>
<protein>
    <recommendedName>
        <fullName evidence="1">Histidine--tRNA ligase</fullName>
        <ecNumber evidence="1">6.1.1.21</ecNumber>
    </recommendedName>
    <alternativeName>
        <fullName evidence="1">Histidyl-tRNA synthetase</fullName>
        <shortName evidence="1">HisRS</shortName>
    </alternativeName>
</protein>
<keyword id="KW-0030">Aminoacyl-tRNA synthetase</keyword>
<keyword id="KW-0067">ATP-binding</keyword>
<keyword id="KW-0963">Cytoplasm</keyword>
<keyword id="KW-0436">Ligase</keyword>
<keyword id="KW-0547">Nucleotide-binding</keyword>
<keyword id="KW-0648">Protein biosynthesis</keyword>
<organism>
    <name type="scientific">Rhodopseudomonas palustris (strain BisB18)</name>
    <dbReference type="NCBI Taxonomy" id="316056"/>
    <lineage>
        <taxon>Bacteria</taxon>
        <taxon>Pseudomonadati</taxon>
        <taxon>Pseudomonadota</taxon>
        <taxon>Alphaproteobacteria</taxon>
        <taxon>Hyphomicrobiales</taxon>
        <taxon>Nitrobacteraceae</taxon>
        <taxon>Rhodopseudomonas</taxon>
    </lineage>
</organism>
<comment type="catalytic activity">
    <reaction evidence="1">
        <text>tRNA(His) + L-histidine + ATP = L-histidyl-tRNA(His) + AMP + diphosphate + H(+)</text>
        <dbReference type="Rhea" id="RHEA:17313"/>
        <dbReference type="Rhea" id="RHEA-COMP:9665"/>
        <dbReference type="Rhea" id="RHEA-COMP:9689"/>
        <dbReference type="ChEBI" id="CHEBI:15378"/>
        <dbReference type="ChEBI" id="CHEBI:30616"/>
        <dbReference type="ChEBI" id="CHEBI:33019"/>
        <dbReference type="ChEBI" id="CHEBI:57595"/>
        <dbReference type="ChEBI" id="CHEBI:78442"/>
        <dbReference type="ChEBI" id="CHEBI:78527"/>
        <dbReference type="ChEBI" id="CHEBI:456215"/>
        <dbReference type="EC" id="6.1.1.21"/>
    </reaction>
</comment>
<comment type="subunit">
    <text evidence="1">Homodimer.</text>
</comment>
<comment type="subcellular location">
    <subcellularLocation>
        <location evidence="1">Cytoplasm</location>
    </subcellularLocation>
</comment>
<comment type="similarity">
    <text evidence="1">Belongs to the class-II aminoacyl-tRNA synthetase family.</text>
</comment>
<name>SYH_RHOPB</name>
<reference key="1">
    <citation type="submission" date="2006-03" db="EMBL/GenBank/DDBJ databases">
        <title>Complete sequence of Rhodopseudomonas palustris BisB18.</title>
        <authorList>
            <consortium name="US DOE Joint Genome Institute"/>
            <person name="Copeland A."/>
            <person name="Lucas S."/>
            <person name="Lapidus A."/>
            <person name="Barry K."/>
            <person name="Detter J.C."/>
            <person name="Glavina del Rio T."/>
            <person name="Hammon N."/>
            <person name="Israni S."/>
            <person name="Dalin E."/>
            <person name="Tice H."/>
            <person name="Pitluck S."/>
            <person name="Chain P."/>
            <person name="Malfatti S."/>
            <person name="Shin M."/>
            <person name="Vergez L."/>
            <person name="Schmutz J."/>
            <person name="Larimer F."/>
            <person name="Land M."/>
            <person name="Hauser L."/>
            <person name="Pelletier D.A."/>
            <person name="Kyrpides N."/>
            <person name="Anderson I."/>
            <person name="Oda Y."/>
            <person name="Harwood C.S."/>
            <person name="Richardson P."/>
        </authorList>
    </citation>
    <scope>NUCLEOTIDE SEQUENCE [LARGE SCALE GENOMIC DNA]</scope>
    <source>
        <strain>BisB18</strain>
    </source>
</reference>
<sequence>MAEKPKKSQKLRARLPRGLADRGPAELAATRAMVETIRAVYERYGFEPVETPAFEFTDALGKFLPDQDRPNEGVFSFQDDDEQWISLRYDLTAPLARYVAENFDSLPKPYRSYRNGYVYRNEKPGPGRFRQFMQFDADTVGSASPAADAEMCMMAADAMEALGIPRGSYVVKVNNRKVLDGVMESIGLGGEENAGRRLTVLRAIDKLDRLGIEGVKLLLGEGRWDGGEQGKGDFTIGAQLSPETSTPILNYLDLGIRVARDRVESPNRELGIVGYLEQIVSGSETGAQGTTELAQIVRLVEAAGYDDGRIRIDPSVVRGLEYYTGPVYEVELLLDTKDEKGRPVRFGSVGGGGRYDGLVSRFRGEPVPATGFSIGVSRLQAALTLLGKLDTRPQAGPVVVTVFDRDRVADYQKMVARLRAENIRAELYLGNPKNMGNQLKYADKRNSPCVIIQGSDEKNDPDGAQIIVKDLVLGAELASLEKDREEYLQKQAEAQRKVPEADLVDEVRRILAKHSVRWS</sequence>